<gene>
    <name evidence="1" type="primary">rnz</name>
    <name type="ordered locus">RBAM_022150</name>
</gene>
<comment type="function">
    <text evidence="1">Zinc phosphodiesterase, which displays some tRNA 3'-processing endonuclease activity. Probably involved in tRNA maturation, by removing a 3'-trailer from precursor tRNA.</text>
</comment>
<comment type="catalytic activity">
    <reaction evidence="1">
        <text>Endonucleolytic cleavage of RNA, removing extra 3' nucleotides from tRNA precursor, generating 3' termini of tRNAs. A 3'-hydroxy group is left at the tRNA terminus and a 5'-phosphoryl group is left at the trailer molecule.</text>
        <dbReference type="EC" id="3.1.26.11"/>
    </reaction>
</comment>
<comment type="cofactor">
    <cofactor evidence="1">
        <name>Zn(2+)</name>
        <dbReference type="ChEBI" id="CHEBI:29105"/>
    </cofactor>
    <text evidence="1">Binds 2 Zn(2+) ions.</text>
</comment>
<comment type="subunit">
    <text evidence="1">Homodimer.</text>
</comment>
<comment type="similarity">
    <text evidence="1">Belongs to the RNase Z family.</text>
</comment>
<reference key="1">
    <citation type="journal article" date="2007" name="Nat. Biotechnol.">
        <title>Comparative analysis of the complete genome sequence of the plant growth-promoting bacterium Bacillus amyloliquefaciens FZB42.</title>
        <authorList>
            <person name="Chen X.H."/>
            <person name="Koumoutsi A."/>
            <person name="Scholz R."/>
            <person name="Eisenreich A."/>
            <person name="Schneider K."/>
            <person name="Heinemeyer I."/>
            <person name="Morgenstern B."/>
            <person name="Voss B."/>
            <person name="Hess W.R."/>
            <person name="Reva O."/>
            <person name="Junge H."/>
            <person name="Voigt B."/>
            <person name="Jungblut P.R."/>
            <person name="Vater J."/>
            <person name="Suessmuth R."/>
            <person name="Liesegang H."/>
            <person name="Strittmatter A."/>
            <person name="Gottschalk G."/>
            <person name="Borriss R."/>
        </authorList>
    </citation>
    <scope>NUCLEOTIDE SEQUENCE [LARGE SCALE GENOMIC DNA]</scope>
    <source>
        <strain>DSM 23117 / BGSC 10A6 / LMG 26770 / FZB42</strain>
    </source>
</reference>
<feature type="chain" id="PRO_1000070262" description="Ribonuclease Z">
    <location>
        <begin position="1"/>
        <end position="308"/>
    </location>
</feature>
<feature type="active site" description="Proton acceptor" evidence="1">
    <location>
        <position position="67"/>
    </location>
</feature>
<feature type="binding site" evidence="1">
    <location>
        <position position="63"/>
    </location>
    <ligand>
        <name>Zn(2+)</name>
        <dbReference type="ChEBI" id="CHEBI:29105"/>
        <label>1</label>
        <note>catalytic</note>
    </ligand>
</feature>
<feature type="binding site" evidence="1">
    <location>
        <position position="65"/>
    </location>
    <ligand>
        <name>Zn(2+)</name>
        <dbReference type="ChEBI" id="CHEBI:29105"/>
        <label>1</label>
        <note>catalytic</note>
    </ligand>
</feature>
<feature type="binding site" evidence="1">
    <location>
        <position position="67"/>
    </location>
    <ligand>
        <name>Zn(2+)</name>
        <dbReference type="ChEBI" id="CHEBI:29105"/>
        <label>2</label>
        <note>catalytic</note>
    </ligand>
</feature>
<feature type="binding site" evidence="1">
    <location>
        <position position="68"/>
    </location>
    <ligand>
        <name>Zn(2+)</name>
        <dbReference type="ChEBI" id="CHEBI:29105"/>
        <label>2</label>
        <note>catalytic</note>
    </ligand>
</feature>
<feature type="binding site" evidence="1">
    <location>
        <position position="140"/>
    </location>
    <ligand>
        <name>Zn(2+)</name>
        <dbReference type="ChEBI" id="CHEBI:29105"/>
        <label>1</label>
        <note>catalytic</note>
    </ligand>
</feature>
<feature type="binding site" evidence="1">
    <location>
        <position position="211"/>
    </location>
    <ligand>
        <name>Zn(2+)</name>
        <dbReference type="ChEBI" id="CHEBI:29105"/>
        <label>1</label>
        <note>catalytic</note>
    </ligand>
</feature>
<feature type="binding site" evidence="1">
    <location>
        <position position="211"/>
    </location>
    <ligand>
        <name>Zn(2+)</name>
        <dbReference type="ChEBI" id="CHEBI:29105"/>
        <label>2</label>
        <note>catalytic</note>
    </ligand>
</feature>
<feature type="binding site" evidence="1">
    <location>
        <position position="269"/>
    </location>
    <ligand>
        <name>Zn(2+)</name>
        <dbReference type="ChEBI" id="CHEBI:29105"/>
        <label>2</label>
        <note>catalytic</note>
    </ligand>
</feature>
<accession>A7Z6F0</accession>
<protein>
    <recommendedName>
        <fullName evidence="1">Ribonuclease Z</fullName>
        <shortName evidence="1">RNase Z</shortName>
        <ecNumber evidence="1">3.1.26.11</ecNumber>
    </recommendedName>
    <alternativeName>
        <fullName evidence="1">tRNA 3 endonuclease</fullName>
    </alternativeName>
    <alternativeName>
        <fullName evidence="1">tRNase Z</fullName>
    </alternativeName>
</protein>
<sequence>MELLFLGTGAGMPAKTRNVTSVALKLLEERRSVWLFDCGEATQHQILHTTIKPRKIEKIFITHLHGDHVYGLPGLLGSRSFQGGEEELTIYGPKGIKAFIETSLNVTATHLTYPLTVHEIEEGTVFEDEQFIVTAASVIHGVEAFGYRVQEKDIPGALQAGRLKEMNIPPGPVYQKIKKGETVTLDDGRIINGRDFLEPPKKGRIVAFSGDTRASERVTELARNADVLVHEATFAKEDAKLAHNYYHATTEQAAQTAKKAGAKQLILTHISARYQGESPIERLEHEAKAVFENSKIAFDFMEVTVERS</sequence>
<name>RNZ_BACVZ</name>
<organism>
    <name type="scientific">Bacillus velezensis (strain DSM 23117 / BGSC 10A6 / LMG 26770 / FZB42)</name>
    <name type="common">Bacillus amyloliquefaciens subsp. plantarum</name>
    <dbReference type="NCBI Taxonomy" id="326423"/>
    <lineage>
        <taxon>Bacteria</taxon>
        <taxon>Bacillati</taxon>
        <taxon>Bacillota</taxon>
        <taxon>Bacilli</taxon>
        <taxon>Bacillales</taxon>
        <taxon>Bacillaceae</taxon>
        <taxon>Bacillus</taxon>
        <taxon>Bacillus amyloliquefaciens group</taxon>
    </lineage>
</organism>
<proteinExistence type="inferred from homology"/>
<evidence type="ECO:0000255" key="1">
    <source>
        <dbReference type="HAMAP-Rule" id="MF_01818"/>
    </source>
</evidence>
<dbReference type="EC" id="3.1.26.11" evidence="1"/>
<dbReference type="EMBL" id="CP000560">
    <property type="protein sequence ID" value="ABS74576.1"/>
    <property type="molecule type" value="Genomic_DNA"/>
</dbReference>
<dbReference type="RefSeq" id="WP_012117934.1">
    <property type="nucleotide sequence ID" value="NC_009725.2"/>
</dbReference>
<dbReference type="SMR" id="A7Z6F0"/>
<dbReference type="GeneID" id="93081352"/>
<dbReference type="KEGG" id="bay:RBAM_022150"/>
<dbReference type="HOGENOM" id="CLU_031317_2_0_9"/>
<dbReference type="Proteomes" id="UP000001120">
    <property type="component" value="Chromosome"/>
</dbReference>
<dbReference type="GO" id="GO:0042781">
    <property type="term" value="F:3'-tRNA processing endoribonuclease activity"/>
    <property type="evidence" value="ECO:0007669"/>
    <property type="project" value="UniProtKB-UniRule"/>
</dbReference>
<dbReference type="GO" id="GO:0008270">
    <property type="term" value="F:zinc ion binding"/>
    <property type="evidence" value="ECO:0007669"/>
    <property type="project" value="UniProtKB-UniRule"/>
</dbReference>
<dbReference type="CDD" id="cd07717">
    <property type="entry name" value="RNaseZ_ZiPD-like_MBL-fold"/>
    <property type="match status" value="1"/>
</dbReference>
<dbReference type="FunFam" id="3.60.15.10:FF:000002">
    <property type="entry name" value="Ribonuclease Z"/>
    <property type="match status" value="1"/>
</dbReference>
<dbReference type="Gene3D" id="3.60.15.10">
    <property type="entry name" value="Ribonuclease Z/Hydroxyacylglutathione hydrolase-like"/>
    <property type="match status" value="1"/>
</dbReference>
<dbReference type="HAMAP" id="MF_01818">
    <property type="entry name" value="RNase_Z_BN"/>
    <property type="match status" value="1"/>
</dbReference>
<dbReference type="InterPro" id="IPR001279">
    <property type="entry name" value="Metallo-B-lactamas"/>
</dbReference>
<dbReference type="InterPro" id="IPR036866">
    <property type="entry name" value="RibonucZ/Hydroxyglut_hydro"/>
</dbReference>
<dbReference type="InterPro" id="IPR013471">
    <property type="entry name" value="RNase_Z/BN"/>
</dbReference>
<dbReference type="NCBIfam" id="NF000801">
    <property type="entry name" value="PRK00055.1-3"/>
    <property type="match status" value="1"/>
</dbReference>
<dbReference type="NCBIfam" id="TIGR02651">
    <property type="entry name" value="RNase_Z"/>
    <property type="match status" value="1"/>
</dbReference>
<dbReference type="PANTHER" id="PTHR46018">
    <property type="entry name" value="ZINC PHOSPHODIESTERASE ELAC PROTEIN 1"/>
    <property type="match status" value="1"/>
</dbReference>
<dbReference type="PANTHER" id="PTHR46018:SF2">
    <property type="entry name" value="ZINC PHOSPHODIESTERASE ELAC PROTEIN 1"/>
    <property type="match status" value="1"/>
</dbReference>
<dbReference type="Pfam" id="PF12706">
    <property type="entry name" value="Lactamase_B_2"/>
    <property type="match status" value="2"/>
</dbReference>
<dbReference type="SUPFAM" id="SSF56281">
    <property type="entry name" value="Metallo-hydrolase/oxidoreductase"/>
    <property type="match status" value="1"/>
</dbReference>
<keyword id="KW-0255">Endonuclease</keyword>
<keyword id="KW-0378">Hydrolase</keyword>
<keyword id="KW-0479">Metal-binding</keyword>
<keyword id="KW-0540">Nuclease</keyword>
<keyword id="KW-0819">tRNA processing</keyword>
<keyword id="KW-0862">Zinc</keyword>